<proteinExistence type="inferred from homology"/>
<name>Y2969_YERPA</name>
<accession>Q1C3P1</accession>
<evidence type="ECO:0000255" key="1">
    <source>
        <dbReference type="HAMAP-Rule" id="MF_00764"/>
    </source>
</evidence>
<feature type="chain" id="PRO_1000046787" description="UPF0306 protein YPA_2969">
    <location>
        <begin position="1"/>
        <end position="147"/>
    </location>
</feature>
<dbReference type="EMBL" id="CP000308">
    <property type="protein sequence ID" value="ABG14931.1"/>
    <property type="molecule type" value="Genomic_DNA"/>
</dbReference>
<dbReference type="RefSeq" id="WP_002209282.1">
    <property type="nucleotide sequence ID" value="NZ_CP009906.1"/>
</dbReference>
<dbReference type="SMR" id="Q1C3P1"/>
<dbReference type="KEGG" id="ypa:YPA_2969"/>
<dbReference type="Proteomes" id="UP000001971">
    <property type="component" value="Chromosome"/>
</dbReference>
<dbReference type="Gene3D" id="2.30.110.10">
    <property type="entry name" value="Electron Transport, Fmn-binding Protein, Chain A"/>
    <property type="match status" value="1"/>
</dbReference>
<dbReference type="HAMAP" id="MF_00764">
    <property type="entry name" value="UPF0306"/>
    <property type="match status" value="1"/>
</dbReference>
<dbReference type="InterPro" id="IPR012349">
    <property type="entry name" value="Split_barrel_FMN-bd"/>
</dbReference>
<dbReference type="InterPro" id="IPR011194">
    <property type="entry name" value="UPF0306"/>
</dbReference>
<dbReference type="NCBIfam" id="NF002900">
    <property type="entry name" value="PRK03467.1"/>
    <property type="match status" value="1"/>
</dbReference>
<dbReference type="PIRSF" id="PIRSF009554">
    <property type="entry name" value="UCP009554"/>
    <property type="match status" value="1"/>
</dbReference>
<dbReference type="SUPFAM" id="SSF50475">
    <property type="entry name" value="FMN-binding split barrel"/>
    <property type="match status" value="1"/>
</dbReference>
<reference key="1">
    <citation type="journal article" date="2006" name="J. Bacteriol.">
        <title>Complete genome sequence of Yersinia pestis strains Antiqua and Nepal516: evidence of gene reduction in an emerging pathogen.</title>
        <authorList>
            <person name="Chain P.S.G."/>
            <person name="Hu P."/>
            <person name="Malfatti S.A."/>
            <person name="Radnedge L."/>
            <person name="Larimer F."/>
            <person name="Vergez L.M."/>
            <person name="Worsham P."/>
            <person name="Chu M.C."/>
            <person name="Andersen G.L."/>
        </authorList>
    </citation>
    <scope>NUCLEOTIDE SEQUENCE [LARGE SCALE GENOMIC DNA]</scope>
    <source>
        <strain>Antiqua</strain>
    </source>
</reference>
<gene>
    <name type="ordered locus">YPA_2969</name>
</gene>
<comment type="similarity">
    <text evidence="1">Belongs to the UPF0306 family.</text>
</comment>
<protein>
    <recommendedName>
        <fullName evidence="1">UPF0306 protein YPA_2969</fullName>
    </recommendedName>
</protein>
<organism>
    <name type="scientific">Yersinia pestis bv. Antiqua (strain Antiqua)</name>
    <dbReference type="NCBI Taxonomy" id="360102"/>
    <lineage>
        <taxon>Bacteria</taxon>
        <taxon>Pseudomonadati</taxon>
        <taxon>Pseudomonadota</taxon>
        <taxon>Gammaproteobacteria</taxon>
        <taxon>Enterobacterales</taxon>
        <taxon>Yersiniaceae</taxon>
        <taxon>Yersinia</taxon>
    </lineage>
</organism>
<sequence length="147" mass="16712">MNNPDDVLLINRFLRQQHVLTLCAGSGMDMWCASCFYVFDENQMALFLMTEKHTRHSELMLINPQVAGTVATQSRTIALIKGIQYRGEISLLSGDAEQAARNRYCRRFPVAKVSSAPLWQLNLLEIKMTNNALGFGKKLHWSRVEPL</sequence>